<sequence>MSGSTGERSFADIITSIRYWVIHSITIPSLFIAGWLFVSTGLAYDVFGSPRPNEYFTESRQGIPLITGRFDPLDQLDEFSRSF</sequence>
<dbReference type="EMBL" id="AJ879453">
    <property type="protein sequence ID" value="CAI53810.1"/>
    <property type="molecule type" value="Genomic_DNA"/>
</dbReference>
<dbReference type="RefSeq" id="YP_319781.1">
    <property type="nucleotide sequence ID" value="NC_007407.1"/>
</dbReference>
<dbReference type="SMR" id="Q3V518"/>
<dbReference type="GeneID" id="3677466"/>
<dbReference type="GO" id="GO:0009535">
    <property type="term" value="C:chloroplast thylakoid membrane"/>
    <property type="evidence" value="ECO:0007669"/>
    <property type="project" value="UniProtKB-SubCell"/>
</dbReference>
<dbReference type="GO" id="GO:0009539">
    <property type="term" value="C:photosystem II reaction center"/>
    <property type="evidence" value="ECO:0007669"/>
    <property type="project" value="InterPro"/>
</dbReference>
<dbReference type="GO" id="GO:0009055">
    <property type="term" value="F:electron transfer activity"/>
    <property type="evidence" value="ECO:0007669"/>
    <property type="project" value="UniProtKB-UniRule"/>
</dbReference>
<dbReference type="GO" id="GO:0020037">
    <property type="term" value="F:heme binding"/>
    <property type="evidence" value="ECO:0007669"/>
    <property type="project" value="InterPro"/>
</dbReference>
<dbReference type="GO" id="GO:0005506">
    <property type="term" value="F:iron ion binding"/>
    <property type="evidence" value="ECO:0007669"/>
    <property type="project" value="UniProtKB-UniRule"/>
</dbReference>
<dbReference type="GO" id="GO:0009767">
    <property type="term" value="P:photosynthetic electron transport chain"/>
    <property type="evidence" value="ECO:0007669"/>
    <property type="project" value="InterPro"/>
</dbReference>
<dbReference type="Gene3D" id="1.20.5.860">
    <property type="entry name" value="Photosystem II cytochrome b559, alpha subunit"/>
    <property type="match status" value="1"/>
</dbReference>
<dbReference type="HAMAP" id="MF_00642">
    <property type="entry name" value="PSII_PsbE"/>
    <property type="match status" value="1"/>
</dbReference>
<dbReference type="InterPro" id="IPR006217">
    <property type="entry name" value="PSII_cyt_b559_asu"/>
</dbReference>
<dbReference type="InterPro" id="IPR037025">
    <property type="entry name" value="PSII_cyt_b559_asu_sf"/>
</dbReference>
<dbReference type="InterPro" id="IPR006216">
    <property type="entry name" value="PSII_cyt_b559_CS"/>
</dbReference>
<dbReference type="InterPro" id="IPR013081">
    <property type="entry name" value="PSII_cyt_b559_N"/>
</dbReference>
<dbReference type="InterPro" id="IPR013082">
    <property type="entry name" value="PSII_cytb559_asu_lum"/>
</dbReference>
<dbReference type="NCBIfam" id="TIGR01332">
    <property type="entry name" value="cyt_b559_alpha"/>
    <property type="match status" value="1"/>
</dbReference>
<dbReference type="PANTHER" id="PTHR33391:SF13">
    <property type="entry name" value="CYTOCHROME B559 SUBUNIT ALPHA"/>
    <property type="match status" value="1"/>
</dbReference>
<dbReference type="PANTHER" id="PTHR33391">
    <property type="entry name" value="CYTOCHROME B559 SUBUNIT BETA-RELATED"/>
    <property type="match status" value="1"/>
</dbReference>
<dbReference type="Pfam" id="PF00283">
    <property type="entry name" value="Cytochrom_B559"/>
    <property type="match status" value="1"/>
</dbReference>
<dbReference type="Pfam" id="PF00284">
    <property type="entry name" value="Cytochrom_B559a"/>
    <property type="match status" value="1"/>
</dbReference>
<dbReference type="PIRSF" id="PIRSF000036">
    <property type="entry name" value="PsbE"/>
    <property type="match status" value="1"/>
</dbReference>
<dbReference type="SUPFAM" id="SSF161045">
    <property type="entry name" value="Cytochrome b559 subunits"/>
    <property type="match status" value="1"/>
</dbReference>
<dbReference type="PROSITE" id="PS00537">
    <property type="entry name" value="CYTOCHROME_B559"/>
    <property type="match status" value="1"/>
</dbReference>
<proteinExistence type="inferred from homology"/>
<gene>
    <name evidence="1" type="primary">psbE</name>
</gene>
<keyword id="KW-0150">Chloroplast</keyword>
<keyword id="KW-0249">Electron transport</keyword>
<keyword id="KW-0349">Heme</keyword>
<keyword id="KW-0408">Iron</keyword>
<keyword id="KW-0472">Membrane</keyword>
<keyword id="KW-0479">Metal-binding</keyword>
<keyword id="KW-0602">Photosynthesis</keyword>
<keyword id="KW-0604">Photosystem II</keyword>
<keyword id="KW-0934">Plastid</keyword>
<keyword id="KW-0793">Thylakoid</keyword>
<keyword id="KW-0812">Transmembrane</keyword>
<keyword id="KW-1133">Transmembrane helix</keyword>
<keyword id="KW-0813">Transport</keyword>
<comment type="function">
    <text evidence="1">This b-type cytochrome is tightly associated with the reaction center of photosystem II (PSII). PSII is a light-driven water:plastoquinone oxidoreductase that uses light energy to abstract electrons from H(2)O, generating O(2) and a proton gradient subsequently used for ATP formation. It consists of a core antenna complex that captures photons, and an electron transfer chain that converts photonic excitation into a charge separation.</text>
</comment>
<comment type="cofactor">
    <cofactor evidence="1">
        <name>heme b</name>
        <dbReference type="ChEBI" id="CHEBI:60344"/>
    </cofactor>
    <text evidence="1">With its partner (PsbF) binds heme. PSII binds additional chlorophylls, carotenoids and specific lipids.</text>
</comment>
<comment type="subunit">
    <text evidence="1">Heterodimer of an alpha subunit and a beta subunit. PSII is composed of 1 copy each of membrane proteins PsbA, PsbB, PsbC, PsbD, PsbE, PsbF, PsbH, PsbI, PsbJ, PsbK, PsbL, PsbM, PsbT, PsbX, PsbY, PsbZ, Psb30/Ycf12, at least 3 peripheral proteins of the oxygen-evolving complex and a large number of cofactors. It forms dimeric complexes.</text>
</comment>
<comment type="subcellular location">
    <subcellularLocation>
        <location evidence="1">Plastid</location>
        <location evidence="1">Chloroplast thylakoid membrane</location>
        <topology evidence="1">Single-pass membrane protein</topology>
    </subcellularLocation>
</comment>
<comment type="similarity">
    <text evidence="1">Belongs to the PsbE/PsbF family.</text>
</comment>
<name>PSBE_ACOCL</name>
<organism>
    <name type="scientific">Acorus calamus</name>
    <name type="common">Sweet flag</name>
    <dbReference type="NCBI Taxonomy" id="4465"/>
    <lineage>
        <taxon>Eukaryota</taxon>
        <taxon>Viridiplantae</taxon>
        <taxon>Streptophyta</taxon>
        <taxon>Embryophyta</taxon>
        <taxon>Tracheophyta</taxon>
        <taxon>Spermatophyta</taxon>
        <taxon>Magnoliopsida</taxon>
        <taxon>Liliopsida</taxon>
        <taxon>Acoraceae</taxon>
        <taxon>Acorus</taxon>
    </lineage>
</organism>
<geneLocation type="chloroplast"/>
<evidence type="ECO:0000255" key="1">
    <source>
        <dbReference type="HAMAP-Rule" id="MF_00642"/>
    </source>
</evidence>
<protein>
    <recommendedName>
        <fullName evidence="1">Cytochrome b559 subunit alpha</fullName>
    </recommendedName>
    <alternativeName>
        <fullName evidence="1">PSII reaction center subunit V</fullName>
    </alternativeName>
</protein>
<reference key="1">
    <citation type="journal article" date="2005" name="Mol. Biol. Evol.">
        <title>Analysis of Acorus calamus chloroplast genome and its phylogenetic implications.</title>
        <authorList>
            <person name="Goremykin V.V."/>
            <person name="Holland B."/>
            <person name="Hirsch-Ernst K.I."/>
            <person name="Hellwig F.H."/>
        </authorList>
    </citation>
    <scope>NUCLEOTIDE SEQUENCE [LARGE SCALE GENOMIC DNA]</scope>
</reference>
<feature type="chain" id="PRO_0000233199" description="Cytochrome b559 subunit alpha">
    <location>
        <begin position="1"/>
        <end position="83"/>
    </location>
</feature>
<feature type="transmembrane region" description="Helical" evidence="1">
    <location>
        <begin position="21"/>
        <end position="35"/>
    </location>
</feature>
<feature type="binding site" description="axial binding residue" evidence="1">
    <location>
        <position position="23"/>
    </location>
    <ligand>
        <name>heme</name>
        <dbReference type="ChEBI" id="CHEBI:30413"/>
        <note>ligand shared with beta subunit</note>
    </ligand>
    <ligandPart>
        <name>Fe</name>
        <dbReference type="ChEBI" id="CHEBI:18248"/>
    </ligandPart>
</feature>
<accession>Q3V518</accession>